<reference key="1">
    <citation type="journal article" date="1996" name="DNA Res.">
        <title>A 570-kb DNA sequence of the Escherichia coli K-12 genome corresponding to the 28.0-40.1 min region on the linkage map.</title>
        <authorList>
            <person name="Aiba H."/>
            <person name="Baba T."/>
            <person name="Fujita K."/>
            <person name="Hayashi K."/>
            <person name="Inada T."/>
            <person name="Isono K."/>
            <person name="Itoh T."/>
            <person name="Kasai H."/>
            <person name="Kashimoto K."/>
            <person name="Kimura S."/>
            <person name="Kitakawa M."/>
            <person name="Kitagawa M."/>
            <person name="Makino K."/>
            <person name="Miki T."/>
            <person name="Mizobuchi K."/>
            <person name="Mori H."/>
            <person name="Mori T."/>
            <person name="Motomura K."/>
            <person name="Nakade S."/>
            <person name="Nakamura Y."/>
            <person name="Nashimoto H."/>
            <person name="Nishio Y."/>
            <person name="Oshima T."/>
            <person name="Saito N."/>
            <person name="Sampei G."/>
            <person name="Seki Y."/>
            <person name="Sivasundaram S."/>
            <person name="Tagami H."/>
            <person name="Takeda J."/>
            <person name="Takemoto K."/>
            <person name="Takeuchi Y."/>
            <person name="Wada C."/>
            <person name="Yamamoto Y."/>
            <person name="Horiuchi T."/>
        </authorList>
    </citation>
    <scope>NUCLEOTIDE SEQUENCE [LARGE SCALE GENOMIC DNA]</scope>
    <source>
        <strain>K12 / W3110 / ATCC 27325 / DSM 5911</strain>
    </source>
</reference>
<reference key="2">
    <citation type="journal article" date="1997" name="Science">
        <title>The complete genome sequence of Escherichia coli K-12.</title>
        <authorList>
            <person name="Blattner F.R."/>
            <person name="Plunkett G. III"/>
            <person name="Bloch C.A."/>
            <person name="Perna N.T."/>
            <person name="Burland V."/>
            <person name="Riley M."/>
            <person name="Collado-Vides J."/>
            <person name="Glasner J.D."/>
            <person name="Rode C.K."/>
            <person name="Mayhew G.F."/>
            <person name="Gregor J."/>
            <person name="Davis N.W."/>
            <person name="Kirkpatrick H.A."/>
            <person name="Goeden M.A."/>
            <person name="Rose D.J."/>
            <person name="Mau B."/>
            <person name="Shao Y."/>
        </authorList>
    </citation>
    <scope>NUCLEOTIDE SEQUENCE [LARGE SCALE GENOMIC DNA]</scope>
    <source>
        <strain>K12 / MG1655 / ATCC 47076</strain>
    </source>
</reference>
<reference key="3">
    <citation type="journal article" date="2006" name="Mol. Syst. Biol.">
        <title>Highly accurate genome sequences of Escherichia coli K-12 strains MG1655 and W3110.</title>
        <authorList>
            <person name="Hayashi K."/>
            <person name="Morooka N."/>
            <person name="Yamamoto Y."/>
            <person name="Fujita K."/>
            <person name="Isono K."/>
            <person name="Choi S."/>
            <person name="Ohtsubo E."/>
            <person name="Baba T."/>
            <person name="Wanner B.L."/>
            <person name="Mori H."/>
            <person name="Horiuchi T."/>
        </authorList>
    </citation>
    <scope>NUCLEOTIDE SEQUENCE [LARGE SCALE GENOMIC DNA]</scope>
    <source>
        <strain>K12 / W3110 / ATCC 27325 / DSM 5911</strain>
    </source>
</reference>
<sequence length="307" mass="33402">MEKNSLFSQRIRLRHLHTFVAVAQQGTLGRAAETLNLSQPALSKTLNELEQLTGARLFERGRQGAQLTLPGEQFLTHAVRVLDAINTAGRSLHRKEGLNNDVVRVGALPTAALGILPSVIGQFHQQQKETTLQVATMSNPMILAGLKTGEIDIGIGRMSDPELMTGLNYELLFLESLKLVVRPNHPLLQENVTLSRVLEWPVVVSPEGTAPRQHSDALVQSQGCKIPSGCIETLSASLSRQLTVEYDYVWFVPSGAVKDDLRHATLVALPVPGHGAGEPIGILTRVDATFSSGCQLMINAIRKSMPF</sequence>
<organism>
    <name type="scientific">Escherichia coli (strain K12)</name>
    <dbReference type="NCBI Taxonomy" id="83333"/>
    <lineage>
        <taxon>Bacteria</taxon>
        <taxon>Pseudomonadati</taxon>
        <taxon>Pseudomonadota</taxon>
        <taxon>Gammaproteobacteria</taxon>
        <taxon>Enterobacterales</taxon>
        <taxon>Enterobacteriaceae</taxon>
        <taxon>Escherichia</taxon>
    </lineage>
</organism>
<name>YDCI_ECOLI</name>
<comment type="similarity">
    <text evidence="2">Belongs to the LysR transcriptional regulatory family.</text>
</comment>
<feature type="chain" id="PRO_0000105783" description="Uncharacterized HTH-type transcriptional regulator YdcI">
    <location>
        <begin position="1"/>
        <end position="307"/>
    </location>
</feature>
<feature type="domain" description="HTH lysR-type" evidence="1">
    <location>
        <begin position="11"/>
        <end position="68"/>
    </location>
</feature>
<feature type="DNA-binding region" description="H-T-H motif" evidence="1">
    <location>
        <begin position="28"/>
        <end position="47"/>
    </location>
</feature>
<keyword id="KW-0238">DNA-binding</keyword>
<keyword id="KW-1185">Reference proteome</keyword>
<keyword id="KW-0804">Transcription</keyword>
<keyword id="KW-0805">Transcription regulation</keyword>
<gene>
    <name type="primary">ydcI</name>
    <name type="ordered locus">b1422</name>
    <name type="ordered locus">JW5226</name>
</gene>
<dbReference type="EMBL" id="U00096">
    <property type="protein sequence ID" value="AAC74504.2"/>
    <property type="molecule type" value="Genomic_DNA"/>
</dbReference>
<dbReference type="EMBL" id="AP009048">
    <property type="protein sequence ID" value="BAA15045.2"/>
    <property type="molecule type" value="Genomic_DNA"/>
</dbReference>
<dbReference type="PIR" id="A64894">
    <property type="entry name" value="A64894"/>
</dbReference>
<dbReference type="RefSeq" id="NP_415939.2">
    <property type="nucleotide sequence ID" value="NC_000913.3"/>
</dbReference>
<dbReference type="RefSeq" id="WP_000414567.1">
    <property type="nucleotide sequence ID" value="NZ_SSZK01000021.1"/>
</dbReference>
<dbReference type="SMR" id="P77171"/>
<dbReference type="BioGRID" id="4260183">
    <property type="interactions" value="132"/>
</dbReference>
<dbReference type="FunCoup" id="P77171">
    <property type="interactions" value="54"/>
</dbReference>
<dbReference type="STRING" id="511145.b1422"/>
<dbReference type="jPOST" id="P77171"/>
<dbReference type="PaxDb" id="511145-b1422"/>
<dbReference type="EnsemblBacteria" id="AAC74504">
    <property type="protein sequence ID" value="AAC74504"/>
    <property type="gene ID" value="b1422"/>
</dbReference>
<dbReference type="GeneID" id="948865"/>
<dbReference type="KEGG" id="ecj:JW5226"/>
<dbReference type="KEGG" id="eco:b1422"/>
<dbReference type="KEGG" id="ecoc:C3026_08280"/>
<dbReference type="PATRIC" id="fig|1411691.4.peg.848"/>
<dbReference type="EchoBASE" id="EB3515"/>
<dbReference type="eggNOG" id="COG0583">
    <property type="taxonomic scope" value="Bacteria"/>
</dbReference>
<dbReference type="HOGENOM" id="CLU_039613_6_0_6"/>
<dbReference type="InParanoid" id="P77171"/>
<dbReference type="OMA" id="STRIMPR"/>
<dbReference type="OrthoDB" id="9814165at2"/>
<dbReference type="PhylomeDB" id="P77171"/>
<dbReference type="BioCyc" id="EcoCyc:G6737-MONOMER"/>
<dbReference type="PRO" id="PR:P77171"/>
<dbReference type="Proteomes" id="UP000000625">
    <property type="component" value="Chromosome"/>
</dbReference>
<dbReference type="GO" id="GO:0005829">
    <property type="term" value="C:cytosol"/>
    <property type="evidence" value="ECO:0000318"/>
    <property type="project" value="GO_Central"/>
</dbReference>
<dbReference type="GO" id="GO:0003677">
    <property type="term" value="F:DNA binding"/>
    <property type="evidence" value="ECO:0000314"/>
    <property type="project" value="EcoCyc"/>
</dbReference>
<dbReference type="GO" id="GO:0003700">
    <property type="term" value="F:DNA-binding transcription factor activity"/>
    <property type="evidence" value="ECO:0007669"/>
    <property type="project" value="InterPro"/>
</dbReference>
<dbReference type="GO" id="GO:0043565">
    <property type="term" value="F:sequence-specific DNA binding"/>
    <property type="evidence" value="ECO:0000314"/>
    <property type="project" value="EcoCyc"/>
</dbReference>
<dbReference type="GO" id="GO:0045892">
    <property type="term" value="P:negative regulation of DNA-templated transcription"/>
    <property type="evidence" value="ECO:0000314"/>
    <property type="project" value="EcoCyc"/>
</dbReference>
<dbReference type="GO" id="GO:0006355">
    <property type="term" value="P:regulation of DNA-templated transcription"/>
    <property type="evidence" value="ECO:0000318"/>
    <property type="project" value="GO_Central"/>
</dbReference>
<dbReference type="FunFam" id="1.10.10.10:FF:000208">
    <property type="entry name" value="LysR family transcriptional regulator"/>
    <property type="match status" value="1"/>
</dbReference>
<dbReference type="FunFam" id="3.40.190.10:FF:000076">
    <property type="entry name" value="LysR family transcriptional regulator"/>
    <property type="match status" value="1"/>
</dbReference>
<dbReference type="Gene3D" id="3.40.190.10">
    <property type="entry name" value="Periplasmic binding protein-like II"/>
    <property type="match status" value="2"/>
</dbReference>
<dbReference type="Gene3D" id="1.10.10.10">
    <property type="entry name" value="Winged helix-like DNA-binding domain superfamily/Winged helix DNA-binding domain"/>
    <property type="match status" value="1"/>
</dbReference>
<dbReference type="InterPro" id="IPR050950">
    <property type="entry name" value="HTH-type_LysR_regulators"/>
</dbReference>
<dbReference type="InterPro" id="IPR005119">
    <property type="entry name" value="LysR_subst-bd"/>
</dbReference>
<dbReference type="InterPro" id="IPR000847">
    <property type="entry name" value="Tscrpt_reg_HTH_LysR"/>
</dbReference>
<dbReference type="InterPro" id="IPR036388">
    <property type="entry name" value="WH-like_DNA-bd_sf"/>
</dbReference>
<dbReference type="InterPro" id="IPR036390">
    <property type="entry name" value="WH_DNA-bd_sf"/>
</dbReference>
<dbReference type="PANTHER" id="PTHR30419">
    <property type="entry name" value="HTH-TYPE TRANSCRIPTIONAL REGULATOR YBHD"/>
    <property type="match status" value="1"/>
</dbReference>
<dbReference type="PANTHER" id="PTHR30419:SF8">
    <property type="entry name" value="NITROGEN ASSIMILATION TRANSCRIPTIONAL ACTIVATOR-RELATED"/>
    <property type="match status" value="1"/>
</dbReference>
<dbReference type="Pfam" id="PF00126">
    <property type="entry name" value="HTH_1"/>
    <property type="match status" value="1"/>
</dbReference>
<dbReference type="Pfam" id="PF03466">
    <property type="entry name" value="LysR_substrate"/>
    <property type="match status" value="1"/>
</dbReference>
<dbReference type="PRINTS" id="PR00039">
    <property type="entry name" value="HTHLYSR"/>
</dbReference>
<dbReference type="SUPFAM" id="SSF53850">
    <property type="entry name" value="Periplasmic binding protein-like II"/>
    <property type="match status" value="1"/>
</dbReference>
<dbReference type="SUPFAM" id="SSF46785">
    <property type="entry name" value="Winged helix' DNA-binding domain"/>
    <property type="match status" value="1"/>
</dbReference>
<dbReference type="PROSITE" id="PS50931">
    <property type="entry name" value="HTH_LYSR"/>
    <property type="match status" value="1"/>
</dbReference>
<protein>
    <recommendedName>
        <fullName>Uncharacterized HTH-type transcriptional regulator YdcI</fullName>
    </recommendedName>
</protein>
<accession>P77171</accession>
<evidence type="ECO:0000255" key="1">
    <source>
        <dbReference type="PROSITE-ProRule" id="PRU00253"/>
    </source>
</evidence>
<evidence type="ECO:0000305" key="2"/>
<proteinExistence type="inferred from homology"/>